<dbReference type="EMBL" id="BX571856">
    <property type="protein sequence ID" value="CAG40857.1"/>
    <property type="molecule type" value="Genomic_DNA"/>
</dbReference>
<dbReference type="SMR" id="Q6GFS0"/>
<dbReference type="KEGG" id="sar:SAR1866"/>
<dbReference type="HOGENOM" id="CLU_114342_3_2_9"/>
<dbReference type="Proteomes" id="UP000000596">
    <property type="component" value="Chromosome"/>
</dbReference>
<dbReference type="GO" id="GO:0005886">
    <property type="term" value="C:plasma membrane"/>
    <property type="evidence" value="ECO:0007669"/>
    <property type="project" value="UniProtKB-SubCell"/>
</dbReference>
<dbReference type="GO" id="GO:0062054">
    <property type="term" value="F:fluoride channel activity"/>
    <property type="evidence" value="ECO:0007669"/>
    <property type="project" value="UniProtKB-UniRule"/>
</dbReference>
<dbReference type="GO" id="GO:0046872">
    <property type="term" value="F:metal ion binding"/>
    <property type="evidence" value="ECO:0007669"/>
    <property type="project" value="UniProtKB-KW"/>
</dbReference>
<dbReference type="GO" id="GO:0140114">
    <property type="term" value="P:cellular detoxification of fluoride"/>
    <property type="evidence" value="ECO:0007669"/>
    <property type="project" value="UniProtKB-UniRule"/>
</dbReference>
<dbReference type="HAMAP" id="MF_00454">
    <property type="entry name" value="FluC"/>
    <property type="match status" value="1"/>
</dbReference>
<dbReference type="InterPro" id="IPR003691">
    <property type="entry name" value="FluC"/>
</dbReference>
<dbReference type="NCBIfam" id="TIGR00494">
    <property type="entry name" value="crcB"/>
    <property type="match status" value="1"/>
</dbReference>
<dbReference type="NCBIfam" id="NF010797">
    <property type="entry name" value="PRK14201.1"/>
    <property type="match status" value="1"/>
</dbReference>
<dbReference type="PANTHER" id="PTHR28259">
    <property type="entry name" value="FLUORIDE EXPORT PROTEIN 1-RELATED"/>
    <property type="match status" value="1"/>
</dbReference>
<dbReference type="PANTHER" id="PTHR28259:SF16">
    <property type="entry name" value="FLUORIDE-SPECIFIC ION CHANNEL FLUC 2"/>
    <property type="match status" value="1"/>
</dbReference>
<dbReference type="Pfam" id="PF02537">
    <property type="entry name" value="CRCB"/>
    <property type="match status" value="1"/>
</dbReference>
<protein>
    <recommendedName>
        <fullName evidence="1">Fluoride-specific ion channel FluC 1</fullName>
    </recommendedName>
</protein>
<gene>
    <name evidence="1" type="primary">fluC1</name>
    <name evidence="1" type="synonym">crcB1</name>
    <name type="ordered locus">SAR1866</name>
</gene>
<evidence type="ECO:0000255" key="1">
    <source>
        <dbReference type="HAMAP-Rule" id="MF_00454"/>
    </source>
</evidence>
<reference key="1">
    <citation type="journal article" date="2004" name="Proc. Natl. Acad. Sci. U.S.A.">
        <title>Complete genomes of two clinical Staphylococcus aureus strains: evidence for the rapid evolution of virulence and drug resistance.</title>
        <authorList>
            <person name="Holden M.T.G."/>
            <person name="Feil E.J."/>
            <person name="Lindsay J.A."/>
            <person name="Peacock S.J."/>
            <person name="Day N.P.J."/>
            <person name="Enright M.C."/>
            <person name="Foster T.J."/>
            <person name="Moore C.E."/>
            <person name="Hurst L."/>
            <person name="Atkin R."/>
            <person name="Barron A."/>
            <person name="Bason N."/>
            <person name="Bentley S.D."/>
            <person name="Chillingworth C."/>
            <person name="Chillingworth T."/>
            <person name="Churcher C."/>
            <person name="Clark L."/>
            <person name="Corton C."/>
            <person name="Cronin A."/>
            <person name="Doggett J."/>
            <person name="Dowd L."/>
            <person name="Feltwell T."/>
            <person name="Hance Z."/>
            <person name="Harris B."/>
            <person name="Hauser H."/>
            <person name="Holroyd S."/>
            <person name="Jagels K."/>
            <person name="James K.D."/>
            <person name="Lennard N."/>
            <person name="Line A."/>
            <person name="Mayes R."/>
            <person name="Moule S."/>
            <person name="Mungall K."/>
            <person name="Ormond D."/>
            <person name="Quail M.A."/>
            <person name="Rabbinowitsch E."/>
            <person name="Rutherford K.M."/>
            <person name="Sanders M."/>
            <person name="Sharp S."/>
            <person name="Simmonds M."/>
            <person name="Stevens K."/>
            <person name="Whitehead S."/>
            <person name="Barrell B.G."/>
            <person name="Spratt B.G."/>
            <person name="Parkhill J."/>
        </authorList>
    </citation>
    <scope>NUCLEOTIDE SEQUENCE [LARGE SCALE GENOMIC DNA]</scope>
    <source>
        <strain>MRSA252</strain>
    </source>
</reference>
<organism>
    <name type="scientific">Staphylococcus aureus (strain MRSA252)</name>
    <dbReference type="NCBI Taxonomy" id="282458"/>
    <lineage>
        <taxon>Bacteria</taxon>
        <taxon>Bacillati</taxon>
        <taxon>Bacillota</taxon>
        <taxon>Bacilli</taxon>
        <taxon>Bacillales</taxon>
        <taxon>Staphylococcaceae</taxon>
        <taxon>Staphylococcus</taxon>
    </lineage>
</organism>
<keyword id="KW-1003">Cell membrane</keyword>
<keyword id="KW-0407">Ion channel</keyword>
<keyword id="KW-0406">Ion transport</keyword>
<keyword id="KW-0472">Membrane</keyword>
<keyword id="KW-0479">Metal-binding</keyword>
<keyword id="KW-0915">Sodium</keyword>
<keyword id="KW-0812">Transmembrane</keyword>
<keyword id="KW-1133">Transmembrane helix</keyword>
<keyword id="KW-0813">Transport</keyword>
<accession>Q6GFS0</accession>
<feature type="chain" id="PRO_0000110179" description="Fluoride-specific ion channel FluC 1">
    <location>
        <begin position="1"/>
        <end position="147"/>
    </location>
</feature>
<feature type="transmembrane region" description="Helical" evidence="1">
    <location>
        <begin position="29"/>
        <end position="49"/>
    </location>
</feature>
<feature type="transmembrane region" description="Helical" evidence="1">
    <location>
        <begin position="61"/>
        <end position="81"/>
    </location>
</feature>
<feature type="transmembrane region" description="Helical" evidence="1">
    <location>
        <begin position="90"/>
        <end position="110"/>
    </location>
</feature>
<feature type="transmembrane region" description="Helical" evidence="1">
    <location>
        <begin position="118"/>
        <end position="138"/>
    </location>
</feature>
<feature type="binding site" evidence="1">
    <location>
        <position position="97"/>
    </location>
    <ligand>
        <name>Na(+)</name>
        <dbReference type="ChEBI" id="CHEBI:29101"/>
        <note>structural</note>
    </ligand>
</feature>
<feature type="binding site" evidence="1">
    <location>
        <position position="100"/>
    </location>
    <ligand>
        <name>Na(+)</name>
        <dbReference type="ChEBI" id="CHEBI:29101"/>
        <note>structural</note>
    </ligand>
</feature>
<sequence length="147" mass="16352">MHRQFLSSRCQNLFFKFKLLLFEVNQMQYVYIFIGGALGALLRYLISFLNTDGGFPIGTLIANLTGAFVMGLLTALTIAFFSNHPTLKKAITTGFLGALTTFSTFQLELIHMFDHQQFITLLLYAVTSYVFGILLCYVGIKLGGGLS</sequence>
<proteinExistence type="inferred from homology"/>
<name>FLUC1_STAAR</name>
<comment type="function">
    <text evidence="1">Fluoride-specific ion channel. Important for reducing fluoride concentration in the cell, thus reducing its toxicity.</text>
</comment>
<comment type="catalytic activity">
    <reaction evidence="1">
        <text>fluoride(in) = fluoride(out)</text>
        <dbReference type="Rhea" id="RHEA:76159"/>
        <dbReference type="ChEBI" id="CHEBI:17051"/>
    </reaction>
    <physiologicalReaction direction="left-to-right" evidence="1">
        <dbReference type="Rhea" id="RHEA:76160"/>
    </physiologicalReaction>
</comment>
<comment type="activity regulation">
    <text evidence="1">Na(+) is not transported, but it plays an essential structural role and its presence is essential for fluoride channel function.</text>
</comment>
<comment type="subcellular location">
    <subcellularLocation>
        <location evidence="1">Cell membrane</location>
        <topology evidence="1">Multi-pass membrane protein</topology>
    </subcellularLocation>
</comment>
<comment type="similarity">
    <text evidence="1">Belongs to the fluoride channel Fluc/FEX (TC 1.A.43) family.</text>
</comment>